<reference key="1">
    <citation type="journal article" date="2005" name="Nucleic Acids Res.">
        <title>The genome sequence of Xanthomonas oryzae pathovar oryzae KACC10331, the bacterial blight pathogen of rice.</title>
        <authorList>
            <person name="Lee B.-M."/>
            <person name="Park Y.-J."/>
            <person name="Park D.-S."/>
            <person name="Kang H.-W."/>
            <person name="Kim J.-G."/>
            <person name="Song E.-S."/>
            <person name="Park I.-C."/>
            <person name="Yoon U.-H."/>
            <person name="Hahn J.-H."/>
            <person name="Koo B.-S."/>
            <person name="Lee G.-B."/>
            <person name="Kim H."/>
            <person name="Park H.-S."/>
            <person name="Yoon K.-O."/>
            <person name="Kim J.-H."/>
            <person name="Jung C.-H."/>
            <person name="Koh N.-H."/>
            <person name="Seo J.-S."/>
            <person name="Go S.-J."/>
        </authorList>
    </citation>
    <scope>NUCLEOTIDE SEQUENCE [LARGE SCALE GENOMIC DNA]</scope>
    <source>
        <strain>KACC10331 / KXO85</strain>
    </source>
</reference>
<dbReference type="EC" id="7.1.2.2" evidence="1"/>
<dbReference type="EMBL" id="AE013598">
    <property type="protein sequence ID" value="AAW73986.1"/>
    <property type="status" value="ALT_INIT"/>
    <property type="molecule type" value="Genomic_DNA"/>
</dbReference>
<dbReference type="SMR" id="Q5H4Y4"/>
<dbReference type="STRING" id="291331.XOO0732"/>
<dbReference type="KEGG" id="xoo:XOO0732"/>
<dbReference type="HOGENOM" id="CLU_022398_0_2_6"/>
<dbReference type="Proteomes" id="UP000006735">
    <property type="component" value="Chromosome"/>
</dbReference>
<dbReference type="GO" id="GO:0005886">
    <property type="term" value="C:plasma membrane"/>
    <property type="evidence" value="ECO:0007669"/>
    <property type="project" value="UniProtKB-SubCell"/>
</dbReference>
<dbReference type="GO" id="GO:0045259">
    <property type="term" value="C:proton-transporting ATP synthase complex"/>
    <property type="evidence" value="ECO:0007669"/>
    <property type="project" value="UniProtKB-KW"/>
</dbReference>
<dbReference type="GO" id="GO:0005524">
    <property type="term" value="F:ATP binding"/>
    <property type="evidence" value="ECO:0007669"/>
    <property type="project" value="UniProtKB-UniRule"/>
</dbReference>
<dbReference type="GO" id="GO:0016887">
    <property type="term" value="F:ATP hydrolysis activity"/>
    <property type="evidence" value="ECO:0007669"/>
    <property type="project" value="InterPro"/>
</dbReference>
<dbReference type="GO" id="GO:0046933">
    <property type="term" value="F:proton-transporting ATP synthase activity, rotational mechanism"/>
    <property type="evidence" value="ECO:0007669"/>
    <property type="project" value="UniProtKB-UniRule"/>
</dbReference>
<dbReference type="CDD" id="cd18110">
    <property type="entry name" value="ATP-synt_F1_beta_C"/>
    <property type="match status" value="1"/>
</dbReference>
<dbReference type="CDD" id="cd18115">
    <property type="entry name" value="ATP-synt_F1_beta_N"/>
    <property type="match status" value="1"/>
</dbReference>
<dbReference type="CDD" id="cd01133">
    <property type="entry name" value="F1-ATPase_beta_CD"/>
    <property type="match status" value="1"/>
</dbReference>
<dbReference type="FunFam" id="1.10.1140.10:FF:000001">
    <property type="entry name" value="ATP synthase subunit beta"/>
    <property type="match status" value="1"/>
</dbReference>
<dbReference type="FunFam" id="3.40.50.300:FF:000004">
    <property type="entry name" value="ATP synthase subunit beta"/>
    <property type="match status" value="1"/>
</dbReference>
<dbReference type="Gene3D" id="2.40.10.170">
    <property type="match status" value="1"/>
</dbReference>
<dbReference type="Gene3D" id="1.10.1140.10">
    <property type="entry name" value="Bovine Mitochondrial F1-atpase, Atp Synthase Beta Chain, Chain D, domain 3"/>
    <property type="match status" value="1"/>
</dbReference>
<dbReference type="Gene3D" id="3.40.50.300">
    <property type="entry name" value="P-loop containing nucleotide triphosphate hydrolases"/>
    <property type="match status" value="1"/>
</dbReference>
<dbReference type="HAMAP" id="MF_01347">
    <property type="entry name" value="ATP_synth_beta_bact"/>
    <property type="match status" value="1"/>
</dbReference>
<dbReference type="InterPro" id="IPR003593">
    <property type="entry name" value="AAA+_ATPase"/>
</dbReference>
<dbReference type="InterPro" id="IPR055190">
    <property type="entry name" value="ATP-synt_VA_C"/>
</dbReference>
<dbReference type="InterPro" id="IPR005722">
    <property type="entry name" value="ATP_synth_F1_bsu"/>
</dbReference>
<dbReference type="InterPro" id="IPR020003">
    <property type="entry name" value="ATPase_a/bsu_AS"/>
</dbReference>
<dbReference type="InterPro" id="IPR050053">
    <property type="entry name" value="ATPase_alpha/beta_chains"/>
</dbReference>
<dbReference type="InterPro" id="IPR004100">
    <property type="entry name" value="ATPase_F1/V1/A1_a/bsu_N"/>
</dbReference>
<dbReference type="InterPro" id="IPR036121">
    <property type="entry name" value="ATPase_F1/V1/A1_a/bsu_N_sf"/>
</dbReference>
<dbReference type="InterPro" id="IPR000194">
    <property type="entry name" value="ATPase_F1/V1/A1_a/bsu_nucl-bd"/>
</dbReference>
<dbReference type="InterPro" id="IPR024034">
    <property type="entry name" value="ATPase_F1/V1_b/a_C"/>
</dbReference>
<dbReference type="InterPro" id="IPR027417">
    <property type="entry name" value="P-loop_NTPase"/>
</dbReference>
<dbReference type="NCBIfam" id="TIGR01039">
    <property type="entry name" value="atpD"/>
    <property type="match status" value="1"/>
</dbReference>
<dbReference type="PANTHER" id="PTHR15184">
    <property type="entry name" value="ATP SYNTHASE"/>
    <property type="match status" value="1"/>
</dbReference>
<dbReference type="PANTHER" id="PTHR15184:SF71">
    <property type="entry name" value="ATP SYNTHASE SUBUNIT BETA, MITOCHONDRIAL"/>
    <property type="match status" value="1"/>
</dbReference>
<dbReference type="Pfam" id="PF00006">
    <property type="entry name" value="ATP-synt_ab"/>
    <property type="match status" value="1"/>
</dbReference>
<dbReference type="Pfam" id="PF02874">
    <property type="entry name" value="ATP-synt_ab_N"/>
    <property type="match status" value="1"/>
</dbReference>
<dbReference type="Pfam" id="PF22919">
    <property type="entry name" value="ATP-synt_VA_C"/>
    <property type="match status" value="1"/>
</dbReference>
<dbReference type="SMART" id="SM00382">
    <property type="entry name" value="AAA"/>
    <property type="match status" value="1"/>
</dbReference>
<dbReference type="SUPFAM" id="SSF47917">
    <property type="entry name" value="C-terminal domain of alpha and beta subunits of F1 ATP synthase"/>
    <property type="match status" value="1"/>
</dbReference>
<dbReference type="SUPFAM" id="SSF50615">
    <property type="entry name" value="N-terminal domain of alpha and beta subunits of F1 ATP synthase"/>
    <property type="match status" value="1"/>
</dbReference>
<dbReference type="SUPFAM" id="SSF52540">
    <property type="entry name" value="P-loop containing nucleoside triphosphate hydrolases"/>
    <property type="match status" value="1"/>
</dbReference>
<dbReference type="PROSITE" id="PS00152">
    <property type="entry name" value="ATPASE_ALPHA_BETA"/>
    <property type="match status" value="1"/>
</dbReference>
<keyword id="KW-0066">ATP synthesis</keyword>
<keyword id="KW-0067">ATP-binding</keyword>
<keyword id="KW-0997">Cell inner membrane</keyword>
<keyword id="KW-1003">Cell membrane</keyword>
<keyword id="KW-0139">CF(1)</keyword>
<keyword id="KW-0375">Hydrogen ion transport</keyword>
<keyword id="KW-0406">Ion transport</keyword>
<keyword id="KW-0472">Membrane</keyword>
<keyword id="KW-0547">Nucleotide-binding</keyword>
<keyword id="KW-1185">Reference proteome</keyword>
<keyword id="KW-1278">Translocase</keyword>
<keyword id="KW-0813">Transport</keyword>
<proteinExistence type="inferred from homology"/>
<accession>Q5H4Y4</accession>
<sequence length="468" mass="50952">MSQGKIVQIIGAVVDVEFPRNEVPKVYHALKVEGTEITLEVQQQLGDGVVRTIALGSTDGLKRNLLATNTERAISVPVGAGTLGRIMDVLGRPIDEAGDVQASDHWEIHRGAPSYEDQSSSTELLETGIKVIDLMCPFAKGGKVGLFGGAGVGKTVNMMELINNIAKAHSGLSVFAGVGERTREGNDFYHEMKDSNVLDKVAMVYGQMNEPPGNRLRVALTGLTMAEYFRDEKDANGKGKDVLLFVDNIYRYTLAGTEVSALLGRMPSAVGYQPTLAEEMGVLQERITSTKSGSITSIQAVYVPADDLTDPSPATTFAHLDSTVTLSRNIASLGIYPAVDPLDSTSRQMDPLVIGHEHYDTAQRVQQTLQKYKELKDIIAILGMDELSEEDKQSVSRARKIERFFSQPFHVAEVFTGSPGKYVSLKDTIRGFKAICDGEYDHLPEQAFYMVGSIEEAVEKANKMSAKA</sequence>
<organism>
    <name type="scientific">Xanthomonas oryzae pv. oryzae (strain KACC10331 / KXO85)</name>
    <dbReference type="NCBI Taxonomy" id="291331"/>
    <lineage>
        <taxon>Bacteria</taxon>
        <taxon>Pseudomonadati</taxon>
        <taxon>Pseudomonadota</taxon>
        <taxon>Gammaproteobacteria</taxon>
        <taxon>Lysobacterales</taxon>
        <taxon>Lysobacteraceae</taxon>
        <taxon>Xanthomonas</taxon>
    </lineage>
</organism>
<gene>
    <name evidence="1" type="primary">atpD</name>
    <name type="ordered locus">XOO0732</name>
</gene>
<protein>
    <recommendedName>
        <fullName evidence="1">ATP synthase subunit beta</fullName>
        <ecNumber evidence="1">7.1.2.2</ecNumber>
    </recommendedName>
    <alternativeName>
        <fullName evidence="1">ATP synthase F1 sector subunit beta</fullName>
    </alternativeName>
    <alternativeName>
        <fullName evidence="1">F-ATPase subunit beta</fullName>
    </alternativeName>
</protein>
<evidence type="ECO:0000255" key="1">
    <source>
        <dbReference type="HAMAP-Rule" id="MF_01347"/>
    </source>
</evidence>
<evidence type="ECO:0000305" key="2"/>
<comment type="function">
    <text evidence="1">Produces ATP from ADP in the presence of a proton gradient across the membrane. The catalytic sites are hosted primarily by the beta subunits.</text>
</comment>
<comment type="catalytic activity">
    <reaction evidence="1">
        <text>ATP + H2O + 4 H(+)(in) = ADP + phosphate + 5 H(+)(out)</text>
        <dbReference type="Rhea" id="RHEA:57720"/>
        <dbReference type="ChEBI" id="CHEBI:15377"/>
        <dbReference type="ChEBI" id="CHEBI:15378"/>
        <dbReference type="ChEBI" id="CHEBI:30616"/>
        <dbReference type="ChEBI" id="CHEBI:43474"/>
        <dbReference type="ChEBI" id="CHEBI:456216"/>
        <dbReference type="EC" id="7.1.2.2"/>
    </reaction>
</comment>
<comment type="subunit">
    <text evidence="1">F-type ATPases have 2 components, CF(1) - the catalytic core - and CF(0) - the membrane proton channel. CF(1) has five subunits: alpha(3), beta(3), gamma(1), delta(1), epsilon(1). CF(0) has three main subunits: a(1), b(2) and c(9-12). The alpha and beta chains form an alternating ring which encloses part of the gamma chain. CF(1) is attached to CF(0) by a central stalk formed by the gamma and epsilon chains, while a peripheral stalk is formed by the delta and b chains.</text>
</comment>
<comment type="subcellular location">
    <subcellularLocation>
        <location evidence="1">Cell inner membrane</location>
        <topology evidence="1">Peripheral membrane protein</topology>
    </subcellularLocation>
</comment>
<comment type="similarity">
    <text evidence="1">Belongs to the ATPase alpha/beta chains family.</text>
</comment>
<comment type="sequence caution" evidence="2">
    <conflict type="erroneous initiation">
        <sequence resource="EMBL-CDS" id="AAW73986"/>
    </conflict>
</comment>
<feature type="chain" id="PRO_0000254431" description="ATP synthase subunit beta">
    <location>
        <begin position="1"/>
        <end position="468"/>
    </location>
</feature>
<feature type="binding site" evidence="1">
    <location>
        <begin position="148"/>
        <end position="155"/>
    </location>
    <ligand>
        <name>ATP</name>
        <dbReference type="ChEBI" id="CHEBI:30616"/>
    </ligand>
</feature>
<name>ATPB_XANOR</name>